<reference key="1">
    <citation type="journal article" date="1992" name="Mol. Pharmacol.">
        <title>Cross-species comparison of 5-lipoxygenase-activating protein.</title>
        <authorList>
            <person name="Vickers P.J."/>
            <person name="O'Neill G.P."/>
            <person name="Mancini J.A."/>
            <person name="Charleson S."/>
            <person name="Abramovitz M."/>
        </authorList>
    </citation>
    <scope>NUCLEOTIDE SEQUENCE [MRNA]</scope>
</reference>
<proteinExistence type="evidence at transcript level"/>
<accession>P30356</accession>
<dbReference type="EMBL" id="M96555">
    <property type="protein sequence ID" value="AAA31032.1"/>
    <property type="molecule type" value="mRNA"/>
</dbReference>
<dbReference type="SMR" id="P30356"/>
<dbReference type="FunCoup" id="P30356">
    <property type="interactions" value="230"/>
</dbReference>
<dbReference type="STRING" id="9823.ENSSSCP00000009958"/>
<dbReference type="PaxDb" id="9823-ENSSSCP00000009958"/>
<dbReference type="PeptideAtlas" id="P30356"/>
<dbReference type="eggNOG" id="ENOG502RZJB">
    <property type="taxonomic scope" value="Eukaryota"/>
</dbReference>
<dbReference type="HOGENOM" id="CLU_110291_0_0_1"/>
<dbReference type="InParanoid" id="P30356"/>
<dbReference type="Proteomes" id="UP000008227">
    <property type="component" value="Unplaced"/>
</dbReference>
<dbReference type="Proteomes" id="UP000314985">
    <property type="component" value="Unplaced"/>
</dbReference>
<dbReference type="Proteomes" id="UP000694570">
    <property type="component" value="Unplaced"/>
</dbReference>
<dbReference type="Proteomes" id="UP000694571">
    <property type="component" value="Unplaced"/>
</dbReference>
<dbReference type="Proteomes" id="UP000694720">
    <property type="component" value="Unplaced"/>
</dbReference>
<dbReference type="Proteomes" id="UP000694722">
    <property type="component" value="Unplaced"/>
</dbReference>
<dbReference type="Proteomes" id="UP000694723">
    <property type="component" value="Unplaced"/>
</dbReference>
<dbReference type="Proteomes" id="UP000694724">
    <property type="component" value="Unplaced"/>
</dbReference>
<dbReference type="Proteomes" id="UP000694725">
    <property type="component" value="Unplaced"/>
</dbReference>
<dbReference type="Proteomes" id="UP000694726">
    <property type="component" value="Unplaced"/>
</dbReference>
<dbReference type="Proteomes" id="UP000694727">
    <property type="component" value="Unplaced"/>
</dbReference>
<dbReference type="Proteomes" id="UP000694728">
    <property type="component" value="Unplaced"/>
</dbReference>
<dbReference type="GO" id="GO:0005783">
    <property type="term" value="C:endoplasmic reticulum"/>
    <property type="evidence" value="ECO:0000318"/>
    <property type="project" value="GO_Central"/>
</dbReference>
<dbReference type="GO" id="GO:0005789">
    <property type="term" value="C:endoplasmic reticulum membrane"/>
    <property type="evidence" value="ECO:0007669"/>
    <property type="project" value="UniProtKB-SubCell"/>
</dbReference>
<dbReference type="GO" id="GO:0005635">
    <property type="term" value="C:nuclear envelope"/>
    <property type="evidence" value="ECO:0000250"/>
    <property type="project" value="UniProtKB"/>
</dbReference>
<dbReference type="GO" id="GO:0031965">
    <property type="term" value="C:nuclear membrane"/>
    <property type="evidence" value="ECO:0000250"/>
    <property type="project" value="UniProtKB"/>
</dbReference>
<dbReference type="GO" id="GO:0050544">
    <property type="term" value="F:arachidonate binding"/>
    <property type="evidence" value="ECO:0000250"/>
    <property type="project" value="UniProtKB"/>
</dbReference>
<dbReference type="GO" id="GO:0008047">
    <property type="term" value="F:enzyme activator activity"/>
    <property type="evidence" value="ECO:0007669"/>
    <property type="project" value="InterPro"/>
</dbReference>
<dbReference type="GO" id="GO:0004602">
    <property type="term" value="F:glutathione peroxidase activity"/>
    <property type="evidence" value="ECO:0000318"/>
    <property type="project" value="GO_Central"/>
</dbReference>
<dbReference type="GO" id="GO:0004364">
    <property type="term" value="F:glutathione transferase activity"/>
    <property type="evidence" value="ECO:0000318"/>
    <property type="project" value="GO_Central"/>
</dbReference>
<dbReference type="GO" id="GO:0004464">
    <property type="term" value="F:leukotriene-C4 synthase activity"/>
    <property type="evidence" value="ECO:0000318"/>
    <property type="project" value="GO_Central"/>
</dbReference>
<dbReference type="GO" id="GO:0019370">
    <property type="term" value="P:leukotriene biosynthetic process"/>
    <property type="evidence" value="ECO:0000318"/>
    <property type="project" value="GO_Central"/>
</dbReference>
<dbReference type="FunFam" id="1.20.120.550:FF:000003">
    <property type="entry name" value="Leukotriene C4 synthase"/>
    <property type="match status" value="1"/>
</dbReference>
<dbReference type="Gene3D" id="1.20.120.550">
    <property type="entry name" value="Membrane associated eicosanoid/glutathione metabolism-like domain"/>
    <property type="match status" value="1"/>
</dbReference>
<dbReference type="InterPro" id="IPR001446">
    <property type="entry name" value="5_LipOase_AP"/>
</dbReference>
<dbReference type="InterPro" id="IPR018295">
    <property type="entry name" value="FLAP/GST2/LTC4S_CS"/>
</dbReference>
<dbReference type="InterPro" id="IPR050997">
    <property type="entry name" value="MAPEG"/>
</dbReference>
<dbReference type="InterPro" id="IPR023352">
    <property type="entry name" value="MAPEG-like_dom_sf"/>
</dbReference>
<dbReference type="InterPro" id="IPR001129">
    <property type="entry name" value="Membr-assoc_MAPEG"/>
</dbReference>
<dbReference type="PANTHER" id="PTHR10250:SF2">
    <property type="entry name" value="ARACHIDONATE 5-LIPOXYGENASE-ACTIVATING PROTEIN"/>
    <property type="match status" value="1"/>
</dbReference>
<dbReference type="PANTHER" id="PTHR10250">
    <property type="entry name" value="MICROSOMAL GLUTATHIONE S-TRANSFERASE"/>
    <property type="match status" value="1"/>
</dbReference>
<dbReference type="Pfam" id="PF01124">
    <property type="entry name" value="MAPEG"/>
    <property type="match status" value="1"/>
</dbReference>
<dbReference type="PRINTS" id="PR00488">
    <property type="entry name" value="5LPOXGNASEAP"/>
</dbReference>
<dbReference type="SUPFAM" id="SSF161084">
    <property type="entry name" value="MAPEG domain-like"/>
    <property type="match status" value="1"/>
</dbReference>
<dbReference type="PROSITE" id="PS01297">
    <property type="entry name" value="FLAP_GST2_LTC4S"/>
    <property type="match status" value="1"/>
</dbReference>
<comment type="function">
    <text evidence="1">Required for leukotriene biosynthesis by ALOX5 (5-lipoxygenase). Anchors ALOX5 to the membrane. Binds arachidonic acid, and could play an essential role in the transfer of arachidonic acid to ALOX5. Binds to MK-886, a compound that blocks the biosynthesis of leukotrienes (By similarity).</text>
</comment>
<comment type="subunit">
    <text evidence="1">Homotrimer. Interacts with LTC4S and ALOX5 (By similarity).</text>
</comment>
<comment type="subcellular location">
    <subcellularLocation>
        <location evidence="1">Nucleus membrane</location>
        <topology evidence="1">Multi-pass membrane protein</topology>
    </subcellularLocation>
    <subcellularLocation>
        <location evidence="1">Endoplasmic reticulum membrane</location>
        <topology evidence="1">Multi-pass membrane protein</topology>
    </subcellularLocation>
</comment>
<comment type="domain">
    <text evidence="1">The C-terminal part after residue 140 is mostly disordered.</text>
</comment>
<comment type="similarity">
    <text evidence="2">Belongs to the MAPEG family.</text>
</comment>
<keyword id="KW-0256">Endoplasmic reticulum</keyword>
<keyword id="KW-0434">Leukotriene biosynthesis</keyword>
<keyword id="KW-0472">Membrane</keyword>
<keyword id="KW-0539">Nucleus</keyword>
<keyword id="KW-1185">Reference proteome</keyword>
<keyword id="KW-0812">Transmembrane</keyword>
<keyword id="KW-1133">Transmembrane helix</keyword>
<gene>
    <name type="primary">ALOX5AP</name>
    <name type="synonym">FLAP</name>
</gene>
<sequence>MDQEAMGNIVLLAIVTLISVVQNAFFAHKVEHESKTHNGRSFQRTGTPAFERVYTANQNCVDAYPTFLVVLWSAGLFCSQVPAAFAGLMYLFVRQKYFVGYLGERTQSTPGYIFGKRIILFLFLMSLAGIFNYFLILFFGSDFENYIKTITTT</sequence>
<feature type="chain" id="PRO_0000217754" description="Arachidonate 5-lipoxygenase-activating protein">
    <location>
        <begin position="1"/>
        <end position="153" status="greater than"/>
    </location>
</feature>
<feature type="topological domain" description="Lumenal" evidence="1">
    <location>
        <begin position="1"/>
        <end position="8"/>
    </location>
</feature>
<feature type="transmembrane region" description="Helical" evidence="1">
    <location>
        <begin position="9"/>
        <end position="30"/>
    </location>
</feature>
<feature type="topological domain" description="Cytoplasmic" evidence="1">
    <location>
        <begin position="31"/>
        <end position="52"/>
    </location>
</feature>
<feature type="transmembrane region" description="Helical" evidence="1">
    <location>
        <begin position="53"/>
        <end position="77"/>
    </location>
</feature>
<feature type="topological domain" description="Lumenal" evidence="1">
    <location>
        <begin position="78"/>
        <end position="80"/>
    </location>
</feature>
<feature type="transmembrane region" description="Helical" evidence="1">
    <location>
        <begin position="81"/>
        <end position="102"/>
    </location>
</feature>
<feature type="topological domain" description="Cytoplasmic" evidence="1">
    <location>
        <begin position="103"/>
        <end position="107"/>
    </location>
</feature>
<feature type="intramembrane region" evidence="1">
    <location>
        <begin position="108"/>
        <end position="115"/>
    </location>
</feature>
<feature type="transmembrane region" description="Helical" evidence="1">
    <location>
        <begin position="116"/>
        <end position="128"/>
    </location>
</feature>
<feature type="topological domain" description="Lumenal" evidence="1">
    <location>
        <begin position="129"/>
        <end position="153"/>
    </location>
</feature>
<feature type="non-terminal residue">
    <location>
        <position position="153"/>
    </location>
</feature>
<protein>
    <recommendedName>
        <fullName>Arachidonate 5-lipoxygenase-activating protein</fullName>
    </recommendedName>
    <alternativeName>
        <fullName>FLAP</fullName>
    </alternativeName>
    <alternativeName>
        <fullName>MK-886-binding protein</fullName>
    </alternativeName>
</protein>
<name>AL5AP_PIG</name>
<organism>
    <name type="scientific">Sus scrofa</name>
    <name type="common">Pig</name>
    <dbReference type="NCBI Taxonomy" id="9823"/>
    <lineage>
        <taxon>Eukaryota</taxon>
        <taxon>Metazoa</taxon>
        <taxon>Chordata</taxon>
        <taxon>Craniata</taxon>
        <taxon>Vertebrata</taxon>
        <taxon>Euteleostomi</taxon>
        <taxon>Mammalia</taxon>
        <taxon>Eutheria</taxon>
        <taxon>Laurasiatheria</taxon>
        <taxon>Artiodactyla</taxon>
        <taxon>Suina</taxon>
        <taxon>Suidae</taxon>
        <taxon>Sus</taxon>
    </lineage>
</organism>
<evidence type="ECO:0000250" key="1"/>
<evidence type="ECO:0000305" key="2"/>